<feature type="chain" id="PRO_1000050368" description="L-seryl-tRNA(Sec) selenium transferase">
    <location>
        <begin position="1"/>
        <end position="461"/>
    </location>
</feature>
<feature type="modified residue" description="N6-(pyridoxal phosphate)lysine" evidence="1">
    <location>
        <position position="294"/>
    </location>
</feature>
<gene>
    <name evidence="1" type="primary">selA</name>
    <name type="ordered locus">CGSHiEE_08600</name>
</gene>
<sequence>MTALFQQLPSVDKILKTSQGSQLITEFGHTAVVAICRELLTQARQFIKKNNQLPEYFSNFDRTFVEIHSRLQKQNQVQIKAVHNLTGTVLHTNLGRALWSEAAQQAALSVMQKNVSLEYDLDEGKRSHRDNYISELLCKLTGAEAACIVNNNAAAVLLMLATFAQGKEVIISRGELIEIGGAFRIPDIMEQAGCHLVEVGTTNRTHLKDYRNAITENTAFLMKVHSSNYQICGFTSSVSEEELAELGREMNVPVVTDLGSGALIDLSQYGLPKESTVQEKVAQGVGLVSFSGDKLLGGVQAGIIVGKKEWIEQLQAHPLKRALRCDKVILAGLEATLRLYLNPEKLTEKLPTLYLLTQPLKQLKINAMRLKERLESRLNSQFDIQIEASQAQIGSGSQPMERIPSVAVTIAEKTNVKLSALSARFKQLSQPIIGRMENGKIWLDLRSLAAIETLLNTLDEL</sequence>
<dbReference type="EC" id="2.9.1.1" evidence="1"/>
<dbReference type="EMBL" id="CP000671">
    <property type="protein sequence ID" value="ABQ99019.1"/>
    <property type="molecule type" value="Genomic_DNA"/>
</dbReference>
<dbReference type="SMR" id="A5UE18"/>
<dbReference type="KEGG" id="hip:CGSHiEE_08600"/>
<dbReference type="HOGENOM" id="CLU_038142_1_0_6"/>
<dbReference type="UniPathway" id="UPA00906">
    <property type="reaction ID" value="UER00896"/>
</dbReference>
<dbReference type="GO" id="GO:0005737">
    <property type="term" value="C:cytoplasm"/>
    <property type="evidence" value="ECO:0007669"/>
    <property type="project" value="UniProtKB-SubCell"/>
</dbReference>
<dbReference type="GO" id="GO:0004125">
    <property type="term" value="F:L-seryl-tRNA(Sec) selenium transferase activity"/>
    <property type="evidence" value="ECO:0007669"/>
    <property type="project" value="UniProtKB-UniRule"/>
</dbReference>
<dbReference type="GO" id="GO:0001717">
    <property type="term" value="P:conversion of seryl-tRNAsec to selenocys-tRNAsec"/>
    <property type="evidence" value="ECO:0007669"/>
    <property type="project" value="UniProtKB-UniRule"/>
</dbReference>
<dbReference type="GO" id="GO:0001514">
    <property type="term" value="P:selenocysteine incorporation"/>
    <property type="evidence" value="ECO:0007669"/>
    <property type="project" value="UniProtKB-UniRule"/>
</dbReference>
<dbReference type="FunFam" id="3.40.640.10:FF:000028">
    <property type="entry name" value="L-seryl-tRNA(Sec) selenium transferase"/>
    <property type="match status" value="1"/>
</dbReference>
<dbReference type="Gene3D" id="3.90.1150.180">
    <property type="match status" value="1"/>
</dbReference>
<dbReference type="Gene3D" id="3.40.640.10">
    <property type="entry name" value="Type I PLP-dependent aspartate aminotransferase-like (Major domain)"/>
    <property type="match status" value="1"/>
</dbReference>
<dbReference type="HAMAP" id="MF_00423">
    <property type="entry name" value="SelA"/>
    <property type="match status" value="1"/>
</dbReference>
<dbReference type="InterPro" id="IPR015424">
    <property type="entry name" value="PyrdxlP-dep_Trfase"/>
</dbReference>
<dbReference type="InterPro" id="IPR015421">
    <property type="entry name" value="PyrdxlP-dep_Trfase_major"/>
</dbReference>
<dbReference type="InterPro" id="IPR018319">
    <property type="entry name" value="SelA-like"/>
</dbReference>
<dbReference type="InterPro" id="IPR004534">
    <property type="entry name" value="SelA_trans"/>
</dbReference>
<dbReference type="InterPro" id="IPR025862">
    <property type="entry name" value="SelA_trans_N_dom"/>
</dbReference>
<dbReference type="NCBIfam" id="TIGR00474">
    <property type="entry name" value="selA"/>
    <property type="match status" value="1"/>
</dbReference>
<dbReference type="PANTHER" id="PTHR32328">
    <property type="entry name" value="L-SERYL-TRNA(SEC) SELENIUM TRANSFERASE"/>
    <property type="match status" value="1"/>
</dbReference>
<dbReference type="PANTHER" id="PTHR32328:SF0">
    <property type="entry name" value="L-SERYL-TRNA(SEC) SELENIUM TRANSFERASE"/>
    <property type="match status" value="1"/>
</dbReference>
<dbReference type="Pfam" id="PF12390">
    <property type="entry name" value="Se-cys_synth_N"/>
    <property type="match status" value="1"/>
</dbReference>
<dbReference type="Pfam" id="PF03841">
    <property type="entry name" value="SelA"/>
    <property type="match status" value="1"/>
</dbReference>
<dbReference type="SUPFAM" id="SSF53383">
    <property type="entry name" value="PLP-dependent transferases"/>
    <property type="match status" value="1"/>
</dbReference>
<reference key="1">
    <citation type="journal article" date="2007" name="Genome Biol.">
        <title>Characterization and modeling of the Haemophilus influenzae core and supragenomes based on the complete genomic sequences of Rd and 12 clinical nontypeable strains.</title>
        <authorList>
            <person name="Hogg J.S."/>
            <person name="Hu F.Z."/>
            <person name="Janto B."/>
            <person name="Boissy R."/>
            <person name="Hayes J."/>
            <person name="Keefe R."/>
            <person name="Post J.C."/>
            <person name="Ehrlich G.D."/>
        </authorList>
    </citation>
    <scope>NUCLEOTIDE SEQUENCE [LARGE SCALE GENOMIC DNA]</scope>
    <source>
        <strain>PittEE</strain>
    </source>
</reference>
<keyword id="KW-0963">Cytoplasm</keyword>
<keyword id="KW-0648">Protein biosynthesis</keyword>
<keyword id="KW-0663">Pyridoxal phosphate</keyword>
<keyword id="KW-0711">Selenium</keyword>
<keyword id="KW-0808">Transferase</keyword>
<accession>A5UE18</accession>
<protein>
    <recommendedName>
        <fullName evidence="1">L-seryl-tRNA(Sec) selenium transferase</fullName>
        <ecNumber evidence="1">2.9.1.1</ecNumber>
    </recommendedName>
    <alternativeName>
        <fullName evidence="1">Selenocysteine synthase</fullName>
        <shortName evidence="1">Sec synthase</shortName>
    </alternativeName>
    <alternativeName>
        <fullName evidence="1">Selenocysteinyl-tRNA(Sec) synthase</fullName>
    </alternativeName>
</protein>
<name>SELA_HAEIE</name>
<proteinExistence type="inferred from homology"/>
<organism>
    <name type="scientific">Haemophilus influenzae (strain PittEE)</name>
    <dbReference type="NCBI Taxonomy" id="374930"/>
    <lineage>
        <taxon>Bacteria</taxon>
        <taxon>Pseudomonadati</taxon>
        <taxon>Pseudomonadota</taxon>
        <taxon>Gammaproteobacteria</taxon>
        <taxon>Pasteurellales</taxon>
        <taxon>Pasteurellaceae</taxon>
        <taxon>Haemophilus</taxon>
    </lineage>
</organism>
<comment type="function">
    <text evidence="1">Converts seryl-tRNA(Sec) to selenocysteinyl-tRNA(Sec) required for selenoprotein biosynthesis.</text>
</comment>
<comment type="catalytic activity">
    <reaction evidence="1">
        <text>L-seryl-tRNA(Sec) + selenophosphate + H(+) = L-selenocysteinyl-tRNA(Sec) + phosphate</text>
        <dbReference type="Rhea" id="RHEA:22728"/>
        <dbReference type="Rhea" id="RHEA-COMP:9742"/>
        <dbReference type="Rhea" id="RHEA-COMP:9743"/>
        <dbReference type="ChEBI" id="CHEBI:15378"/>
        <dbReference type="ChEBI" id="CHEBI:16144"/>
        <dbReference type="ChEBI" id="CHEBI:43474"/>
        <dbReference type="ChEBI" id="CHEBI:78533"/>
        <dbReference type="ChEBI" id="CHEBI:78573"/>
        <dbReference type="EC" id="2.9.1.1"/>
    </reaction>
</comment>
<comment type="cofactor">
    <cofactor evidence="1">
        <name>pyridoxal 5'-phosphate</name>
        <dbReference type="ChEBI" id="CHEBI:597326"/>
    </cofactor>
</comment>
<comment type="pathway">
    <text evidence="1">Aminoacyl-tRNA biosynthesis; selenocysteinyl-tRNA(Sec) biosynthesis; selenocysteinyl-tRNA(Sec) from L-seryl-tRNA(Sec) (bacterial route): step 1/1.</text>
</comment>
<comment type="subcellular location">
    <subcellularLocation>
        <location evidence="1">Cytoplasm</location>
    </subcellularLocation>
</comment>
<comment type="similarity">
    <text evidence="1">Belongs to the SelA family.</text>
</comment>
<evidence type="ECO:0000255" key="1">
    <source>
        <dbReference type="HAMAP-Rule" id="MF_00423"/>
    </source>
</evidence>